<reference key="1">
    <citation type="journal article" date="2003" name="Proc. Natl. Acad. Sci. U.S.A.">
        <title>Complete genome sequence and analysis of Wolinella succinogenes.</title>
        <authorList>
            <person name="Baar C."/>
            <person name="Eppinger M."/>
            <person name="Raddatz G."/>
            <person name="Simon J."/>
            <person name="Lanz C."/>
            <person name="Klimmek O."/>
            <person name="Nandakumar R."/>
            <person name="Gross R."/>
            <person name="Rosinus A."/>
            <person name="Keller H."/>
            <person name="Jagtap P."/>
            <person name="Linke B."/>
            <person name="Meyer F."/>
            <person name="Lederer H."/>
            <person name="Schuster S.C."/>
        </authorList>
    </citation>
    <scope>NUCLEOTIDE SEQUENCE [LARGE SCALE GENOMIC DNA]</scope>
    <source>
        <strain>ATCC 29543 / DSM 1740 / CCUG 13145 / JCM 31913 / LMG 7466 / NCTC 11488 / FDC 602W</strain>
    </source>
</reference>
<comment type="function">
    <text evidence="1">Exhibits a very high intrinsic GTPase hydrolysis rate. Involved in the addition of a carboxymethylaminomethyl (cmnm) group at the wobble position (U34) of certain tRNAs, forming tRNA-cmnm(5)s(2)U34.</text>
</comment>
<comment type="cofactor">
    <cofactor evidence="1">
        <name>K(+)</name>
        <dbReference type="ChEBI" id="CHEBI:29103"/>
    </cofactor>
    <text evidence="1">Binds 1 potassium ion per subunit.</text>
</comment>
<comment type="subunit">
    <text evidence="1">Homodimer. Heterotetramer of two MnmE and two MnmG subunits.</text>
</comment>
<comment type="subcellular location">
    <subcellularLocation>
        <location evidence="1">Cytoplasm</location>
    </subcellularLocation>
</comment>
<comment type="similarity">
    <text evidence="1">Belongs to the TRAFAC class TrmE-Era-EngA-EngB-Septin-like GTPase superfamily. TrmE GTPase family.</text>
</comment>
<comment type="sequence caution" evidence="2">
    <conflict type="erroneous initiation">
        <sequence resource="EMBL-CDS" id="CAE10363"/>
    </conflict>
</comment>
<dbReference type="EC" id="3.6.-.-" evidence="1"/>
<dbReference type="EMBL" id="BX571660">
    <property type="protein sequence ID" value="CAE10363.1"/>
    <property type="status" value="ALT_INIT"/>
    <property type="molecule type" value="Genomic_DNA"/>
</dbReference>
<dbReference type="RefSeq" id="WP_011139149.1">
    <property type="nucleotide sequence ID" value="NC_005090.1"/>
</dbReference>
<dbReference type="SMR" id="Q7M901"/>
<dbReference type="STRING" id="273121.WS1284"/>
<dbReference type="KEGG" id="wsu:WS1284"/>
<dbReference type="eggNOG" id="COG0486">
    <property type="taxonomic scope" value="Bacteria"/>
</dbReference>
<dbReference type="HOGENOM" id="CLU_019624_4_1_7"/>
<dbReference type="Proteomes" id="UP000000422">
    <property type="component" value="Chromosome"/>
</dbReference>
<dbReference type="GO" id="GO:0005829">
    <property type="term" value="C:cytosol"/>
    <property type="evidence" value="ECO:0007669"/>
    <property type="project" value="TreeGrafter"/>
</dbReference>
<dbReference type="GO" id="GO:0005525">
    <property type="term" value="F:GTP binding"/>
    <property type="evidence" value="ECO:0007669"/>
    <property type="project" value="UniProtKB-UniRule"/>
</dbReference>
<dbReference type="GO" id="GO:0003924">
    <property type="term" value="F:GTPase activity"/>
    <property type="evidence" value="ECO:0007669"/>
    <property type="project" value="UniProtKB-UniRule"/>
</dbReference>
<dbReference type="GO" id="GO:0046872">
    <property type="term" value="F:metal ion binding"/>
    <property type="evidence" value="ECO:0007669"/>
    <property type="project" value="UniProtKB-KW"/>
</dbReference>
<dbReference type="GO" id="GO:0030488">
    <property type="term" value="P:tRNA methylation"/>
    <property type="evidence" value="ECO:0007669"/>
    <property type="project" value="TreeGrafter"/>
</dbReference>
<dbReference type="GO" id="GO:0002098">
    <property type="term" value="P:tRNA wobble uridine modification"/>
    <property type="evidence" value="ECO:0007669"/>
    <property type="project" value="TreeGrafter"/>
</dbReference>
<dbReference type="CDD" id="cd04164">
    <property type="entry name" value="trmE"/>
    <property type="match status" value="1"/>
</dbReference>
<dbReference type="CDD" id="cd14858">
    <property type="entry name" value="TrmE_N"/>
    <property type="match status" value="1"/>
</dbReference>
<dbReference type="FunFam" id="3.40.50.300:FF:001376">
    <property type="entry name" value="tRNA modification GTPase MnmE"/>
    <property type="match status" value="1"/>
</dbReference>
<dbReference type="Gene3D" id="3.40.50.300">
    <property type="entry name" value="P-loop containing nucleotide triphosphate hydrolases"/>
    <property type="match status" value="1"/>
</dbReference>
<dbReference type="Gene3D" id="3.30.1360.120">
    <property type="entry name" value="Probable tRNA modification gtpase trme, domain 1"/>
    <property type="match status" value="1"/>
</dbReference>
<dbReference type="Gene3D" id="1.20.120.430">
    <property type="entry name" value="tRNA modification GTPase MnmE domain 2"/>
    <property type="match status" value="1"/>
</dbReference>
<dbReference type="HAMAP" id="MF_00379">
    <property type="entry name" value="GTPase_MnmE"/>
    <property type="match status" value="1"/>
</dbReference>
<dbReference type="InterPro" id="IPR031168">
    <property type="entry name" value="G_TrmE"/>
</dbReference>
<dbReference type="InterPro" id="IPR006073">
    <property type="entry name" value="GTP-bd"/>
</dbReference>
<dbReference type="InterPro" id="IPR018948">
    <property type="entry name" value="GTP-bd_TrmE_N"/>
</dbReference>
<dbReference type="InterPro" id="IPR004520">
    <property type="entry name" value="GTPase_MnmE"/>
</dbReference>
<dbReference type="InterPro" id="IPR027368">
    <property type="entry name" value="MnmE_dom2"/>
</dbReference>
<dbReference type="InterPro" id="IPR025867">
    <property type="entry name" value="MnmE_helical"/>
</dbReference>
<dbReference type="InterPro" id="IPR027417">
    <property type="entry name" value="P-loop_NTPase"/>
</dbReference>
<dbReference type="InterPro" id="IPR005225">
    <property type="entry name" value="Small_GTP-bd"/>
</dbReference>
<dbReference type="InterPro" id="IPR027266">
    <property type="entry name" value="TrmE/GcvT_dom1"/>
</dbReference>
<dbReference type="NCBIfam" id="TIGR00450">
    <property type="entry name" value="mnmE_trmE_thdF"/>
    <property type="match status" value="1"/>
</dbReference>
<dbReference type="NCBIfam" id="NF003661">
    <property type="entry name" value="PRK05291.1-3"/>
    <property type="match status" value="1"/>
</dbReference>
<dbReference type="NCBIfam" id="TIGR00231">
    <property type="entry name" value="small_GTP"/>
    <property type="match status" value="1"/>
</dbReference>
<dbReference type="PANTHER" id="PTHR42714">
    <property type="entry name" value="TRNA MODIFICATION GTPASE GTPBP3"/>
    <property type="match status" value="1"/>
</dbReference>
<dbReference type="PANTHER" id="PTHR42714:SF2">
    <property type="entry name" value="TRNA MODIFICATION GTPASE GTPBP3, MITOCHONDRIAL"/>
    <property type="match status" value="1"/>
</dbReference>
<dbReference type="Pfam" id="PF01926">
    <property type="entry name" value="MMR_HSR1"/>
    <property type="match status" value="1"/>
</dbReference>
<dbReference type="Pfam" id="PF12631">
    <property type="entry name" value="MnmE_helical"/>
    <property type="match status" value="1"/>
</dbReference>
<dbReference type="Pfam" id="PF10396">
    <property type="entry name" value="TrmE_N"/>
    <property type="match status" value="1"/>
</dbReference>
<dbReference type="SUPFAM" id="SSF52540">
    <property type="entry name" value="P-loop containing nucleoside triphosphate hydrolases"/>
    <property type="match status" value="1"/>
</dbReference>
<dbReference type="PROSITE" id="PS51709">
    <property type="entry name" value="G_TRME"/>
    <property type="match status" value="1"/>
</dbReference>
<accession>Q7M901</accession>
<organism>
    <name type="scientific">Wolinella succinogenes (strain ATCC 29543 / DSM 1740 / CCUG 13145 / JCM 31913 / LMG 7466 / NCTC 11488 / FDC 602W)</name>
    <name type="common">Vibrio succinogenes</name>
    <dbReference type="NCBI Taxonomy" id="273121"/>
    <lineage>
        <taxon>Bacteria</taxon>
        <taxon>Pseudomonadati</taxon>
        <taxon>Campylobacterota</taxon>
        <taxon>Epsilonproteobacteria</taxon>
        <taxon>Campylobacterales</taxon>
        <taxon>Helicobacteraceae</taxon>
        <taxon>Wolinella</taxon>
    </lineage>
</organism>
<gene>
    <name evidence="1" type="primary">mnmE</name>
    <name evidence="1" type="synonym">trmE</name>
    <name type="ordered locus">WS1284</name>
</gene>
<feature type="chain" id="PRO_0000345940" description="tRNA modification GTPase MnmE">
    <location>
        <begin position="1"/>
        <end position="456"/>
    </location>
</feature>
<feature type="domain" description="TrmE-type G">
    <location>
        <begin position="222"/>
        <end position="380"/>
    </location>
</feature>
<feature type="binding site" evidence="1">
    <location>
        <position position="29"/>
    </location>
    <ligand>
        <name>(6S)-5-formyl-5,6,7,8-tetrahydrofolate</name>
        <dbReference type="ChEBI" id="CHEBI:57457"/>
    </ligand>
</feature>
<feature type="binding site" evidence="1">
    <location>
        <position position="87"/>
    </location>
    <ligand>
        <name>(6S)-5-formyl-5,6,7,8-tetrahydrofolate</name>
        <dbReference type="ChEBI" id="CHEBI:57457"/>
    </ligand>
</feature>
<feature type="binding site" evidence="1">
    <location>
        <position position="126"/>
    </location>
    <ligand>
        <name>(6S)-5-formyl-5,6,7,8-tetrahydrofolate</name>
        <dbReference type="ChEBI" id="CHEBI:57457"/>
    </ligand>
</feature>
<feature type="binding site" evidence="1">
    <location>
        <begin position="232"/>
        <end position="237"/>
    </location>
    <ligand>
        <name>GTP</name>
        <dbReference type="ChEBI" id="CHEBI:37565"/>
    </ligand>
</feature>
<feature type="binding site" evidence="1">
    <location>
        <position position="232"/>
    </location>
    <ligand>
        <name>K(+)</name>
        <dbReference type="ChEBI" id="CHEBI:29103"/>
    </ligand>
</feature>
<feature type="binding site" evidence="1">
    <location>
        <position position="236"/>
    </location>
    <ligand>
        <name>Mg(2+)</name>
        <dbReference type="ChEBI" id="CHEBI:18420"/>
    </ligand>
</feature>
<feature type="binding site" evidence="1">
    <location>
        <begin position="251"/>
        <end position="257"/>
    </location>
    <ligand>
        <name>GTP</name>
        <dbReference type="ChEBI" id="CHEBI:37565"/>
    </ligand>
</feature>
<feature type="binding site" evidence="1">
    <location>
        <position position="251"/>
    </location>
    <ligand>
        <name>K(+)</name>
        <dbReference type="ChEBI" id="CHEBI:29103"/>
    </ligand>
</feature>
<feature type="binding site" evidence="1">
    <location>
        <position position="253"/>
    </location>
    <ligand>
        <name>K(+)</name>
        <dbReference type="ChEBI" id="CHEBI:29103"/>
    </ligand>
</feature>
<feature type="binding site" evidence="1">
    <location>
        <position position="256"/>
    </location>
    <ligand>
        <name>K(+)</name>
        <dbReference type="ChEBI" id="CHEBI:29103"/>
    </ligand>
</feature>
<feature type="binding site" evidence="1">
    <location>
        <position position="257"/>
    </location>
    <ligand>
        <name>Mg(2+)</name>
        <dbReference type="ChEBI" id="CHEBI:18420"/>
    </ligand>
</feature>
<feature type="binding site" evidence="1">
    <location>
        <begin position="276"/>
        <end position="279"/>
    </location>
    <ligand>
        <name>GTP</name>
        <dbReference type="ChEBI" id="CHEBI:37565"/>
    </ligand>
</feature>
<feature type="binding site" evidence="1">
    <location>
        <position position="456"/>
    </location>
    <ligand>
        <name>(6S)-5-formyl-5,6,7,8-tetrahydrofolate</name>
        <dbReference type="ChEBI" id="CHEBI:57457"/>
    </ligand>
</feature>
<evidence type="ECO:0000255" key="1">
    <source>
        <dbReference type="HAMAP-Rule" id="MF_00379"/>
    </source>
</evidence>
<evidence type="ECO:0000305" key="2"/>
<keyword id="KW-0963">Cytoplasm</keyword>
<keyword id="KW-0342">GTP-binding</keyword>
<keyword id="KW-0378">Hydrolase</keyword>
<keyword id="KW-0460">Magnesium</keyword>
<keyword id="KW-0479">Metal-binding</keyword>
<keyword id="KW-0547">Nucleotide-binding</keyword>
<keyword id="KW-0630">Potassium</keyword>
<keyword id="KW-1185">Reference proteome</keyword>
<keyword id="KW-0819">tRNA processing</keyword>
<proteinExistence type="inferred from homology"/>
<protein>
    <recommendedName>
        <fullName evidence="1">tRNA modification GTPase MnmE</fullName>
        <ecNumber evidence="1">3.6.-.-</ecNumber>
    </recommendedName>
</protein>
<name>MNME_WOLSU</name>
<sequence length="456" mass="50885">MISTNNSSTPETIIALSTPSGAGALAVVKLSGSRALEIALKLSRRDHLQPRHATLANLWNREDEMMDEAILIYFKAPHSYTAEEVVEIQCHGGTLIARKIIQEALALGARVARAGEFTYRAFLNGRIDLSQAEAIGKLIEAKSDESYKVLLKQLKGELGRYVEGVRGSLVEILAYAEVSIDYAEEDLPSDLEARMVEKIERIAEDLERIYQGSKRRSSLVEGYKLAIIGRPNVGKSSLLNALLLWERAIVSDIPGTTRDTIEESLHLGNHWVRIVDTAGIREAQDAIEKIGIERTLLALKESDMVLALFDSSQSLSPEDEQIKELLRAHQENRRILVLFNKSDLSRELQDSELESYPHRYISAKEGGVEELLSLLASWLDEQGGGEELMLTSERQLLCVKSALGELKEARDRLIEGELELFAYHIQGALKELSLITRPYETSELLDVMFGQFCLGK</sequence>